<protein>
    <recommendedName>
        <fullName>Kinesin-like protein KIF22-B</fullName>
    </recommendedName>
    <alternativeName>
        <fullName>Chromokinesin kid-B</fullName>
        <shortName>Xkid-B</shortName>
    </alternativeName>
</protein>
<dbReference type="EMBL" id="AJ249841">
    <property type="protein sequence ID" value="CAB71799.1"/>
    <property type="molecule type" value="mRNA"/>
</dbReference>
<dbReference type="EMBL" id="BC043733">
    <property type="protein sequence ID" value="AAH43733.1"/>
    <property type="molecule type" value="mRNA"/>
</dbReference>
<dbReference type="EMBL" id="BC073177">
    <property type="protein sequence ID" value="AAH73177.1"/>
    <property type="status" value="ALT_INIT"/>
    <property type="molecule type" value="mRNA"/>
</dbReference>
<dbReference type="RefSeq" id="NP_001165449.1">
    <property type="nucleotide sequence ID" value="NM_001171978.1"/>
</dbReference>
<dbReference type="SMR" id="Q7ZYL5"/>
<dbReference type="BioGRID" id="1078895">
    <property type="interactions" value="3"/>
</dbReference>
<dbReference type="IntAct" id="Q7ZYL5">
    <property type="interactions" value="1"/>
</dbReference>
<dbReference type="DNASU" id="100337511"/>
<dbReference type="GeneID" id="100337511"/>
<dbReference type="KEGG" id="xla:100337511"/>
<dbReference type="AGR" id="Xenbase:XB-GENE-6464372"/>
<dbReference type="CTD" id="100337511"/>
<dbReference type="Xenbase" id="XB-GENE-6464372">
    <property type="gene designation" value="kif22.L"/>
</dbReference>
<dbReference type="OrthoDB" id="3176171at2759"/>
<dbReference type="Proteomes" id="UP000186698">
    <property type="component" value="Chromosome 9_10L"/>
</dbReference>
<dbReference type="Bgee" id="100337511">
    <property type="expression patterns" value="Expressed in egg cell and 17 other cell types or tissues"/>
</dbReference>
<dbReference type="GO" id="GO:0005737">
    <property type="term" value="C:cytoplasm"/>
    <property type="evidence" value="ECO:0000318"/>
    <property type="project" value="GO_Central"/>
</dbReference>
<dbReference type="GO" id="GO:0005871">
    <property type="term" value="C:kinesin complex"/>
    <property type="evidence" value="ECO:0000318"/>
    <property type="project" value="GO_Central"/>
</dbReference>
<dbReference type="GO" id="GO:0005874">
    <property type="term" value="C:microtubule"/>
    <property type="evidence" value="ECO:0000318"/>
    <property type="project" value="GO_Central"/>
</dbReference>
<dbReference type="GO" id="GO:0005634">
    <property type="term" value="C:nucleus"/>
    <property type="evidence" value="ECO:0007669"/>
    <property type="project" value="UniProtKB-SubCell"/>
</dbReference>
<dbReference type="GO" id="GO:0005524">
    <property type="term" value="F:ATP binding"/>
    <property type="evidence" value="ECO:0007669"/>
    <property type="project" value="UniProtKB-KW"/>
</dbReference>
<dbReference type="GO" id="GO:0016887">
    <property type="term" value="F:ATP hydrolysis activity"/>
    <property type="evidence" value="ECO:0000318"/>
    <property type="project" value="GO_Central"/>
</dbReference>
<dbReference type="GO" id="GO:0003677">
    <property type="term" value="F:DNA binding"/>
    <property type="evidence" value="ECO:0007669"/>
    <property type="project" value="UniProtKB-KW"/>
</dbReference>
<dbReference type="GO" id="GO:0008017">
    <property type="term" value="F:microtubule binding"/>
    <property type="evidence" value="ECO:0000318"/>
    <property type="project" value="GO_Central"/>
</dbReference>
<dbReference type="GO" id="GO:0003777">
    <property type="term" value="F:microtubule motor activity"/>
    <property type="evidence" value="ECO:0000318"/>
    <property type="project" value="GO_Central"/>
</dbReference>
<dbReference type="GO" id="GO:0007018">
    <property type="term" value="P:microtubule-based movement"/>
    <property type="evidence" value="ECO:0000318"/>
    <property type="project" value="GO_Central"/>
</dbReference>
<dbReference type="GO" id="GO:0007052">
    <property type="term" value="P:mitotic spindle organization"/>
    <property type="evidence" value="ECO:0007669"/>
    <property type="project" value="TreeGrafter"/>
</dbReference>
<dbReference type="GO" id="GO:0051231">
    <property type="term" value="P:spindle elongation"/>
    <property type="evidence" value="ECO:0007669"/>
    <property type="project" value="TreeGrafter"/>
</dbReference>
<dbReference type="CDD" id="cd01376">
    <property type="entry name" value="KISc_KID_like"/>
    <property type="match status" value="1"/>
</dbReference>
<dbReference type="FunFam" id="1.10.150.280:FF:000002">
    <property type="entry name" value="Kinesin-like protein"/>
    <property type="match status" value="1"/>
</dbReference>
<dbReference type="FunFam" id="3.40.850.10:FF:000043">
    <property type="entry name" value="Kinesin-like protein"/>
    <property type="match status" value="1"/>
</dbReference>
<dbReference type="Gene3D" id="1.10.150.280">
    <property type="entry name" value="AF1531-like domain"/>
    <property type="match status" value="1"/>
</dbReference>
<dbReference type="Gene3D" id="3.40.850.10">
    <property type="entry name" value="Kinesin motor domain"/>
    <property type="match status" value="1"/>
</dbReference>
<dbReference type="InterPro" id="IPR027640">
    <property type="entry name" value="Kinesin-like_fam"/>
</dbReference>
<dbReference type="InterPro" id="IPR019821">
    <property type="entry name" value="Kinesin_motor_CS"/>
</dbReference>
<dbReference type="InterPro" id="IPR001752">
    <property type="entry name" value="Kinesin_motor_dom"/>
</dbReference>
<dbReference type="InterPro" id="IPR036961">
    <property type="entry name" value="Kinesin_motor_dom_sf"/>
</dbReference>
<dbReference type="InterPro" id="IPR027417">
    <property type="entry name" value="P-loop_NTPase"/>
</dbReference>
<dbReference type="InterPro" id="IPR010994">
    <property type="entry name" value="RuvA_2-like"/>
</dbReference>
<dbReference type="PANTHER" id="PTHR47969">
    <property type="entry name" value="CHROMOSOME-ASSOCIATED KINESIN KIF4A-RELATED"/>
    <property type="match status" value="1"/>
</dbReference>
<dbReference type="PANTHER" id="PTHR47969:SF9">
    <property type="entry name" value="KINESIN-LIKE PROTEIN"/>
    <property type="match status" value="1"/>
</dbReference>
<dbReference type="Pfam" id="PF12836">
    <property type="entry name" value="HHH_3"/>
    <property type="match status" value="1"/>
</dbReference>
<dbReference type="Pfam" id="PF00225">
    <property type="entry name" value="Kinesin"/>
    <property type="match status" value="1"/>
</dbReference>
<dbReference type="PRINTS" id="PR00380">
    <property type="entry name" value="KINESINHEAVY"/>
</dbReference>
<dbReference type="SMART" id="SM00129">
    <property type="entry name" value="KISc"/>
    <property type="match status" value="1"/>
</dbReference>
<dbReference type="SUPFAM" id="SSF52540">
    <property type="entry name" value="P-loop containing nucleoside triphosphate hydrolases"/>
    <property type="match status" value="1"/>
</dbReference>
<dbReference type="SUPFAM" id="SSF47781">
    <property type="entry name" value="RuvA domain 2-like"/>
    <property type="match status" value="1"/>
</dbReference>
<dbReference type="PROSITE" id="PS00411">
    <property type="entry name" value="KINESIN_MOTOR_1"/>
    <property type="match status" value="1"/>
</dbReference>
<dbReference type="PROSITE" id="PS50067">
    <property type="entry name" value="KINESIN_MOTOR_2"/>
    <property type="match status" value="1"/>
</dbReference>
<accession>Q7ZYL5</accession>
<accession>Q6GPG0</accession>
<accession>Q9I9A8</accession>
<comment type="function">
    <text evidence="2">Kinesin family member that is involved in spindle formation and the movements of chromosomes during mitosis and meiosis. Binds to microtubules and to DNA.</text>
</comment>
<comment type="subcellular location">
    <subcellularLocation>
        <location evidence="2">Nucleus</location>
    </subcellularLocation>
    <subcellularLocation>
        <location evidence="6">Cytoplasm</location>
        <location evidence="6">Cytoskeleton</location>
    </subcellularLocation>
</comment>
<comment type="PTM">
    <text evidence="2">Ubiquitinated, leading to its subsequent proteasomal degradation.</text>
</comment>
<comment type="similarity">
    <text evidence="4">Belongs to the TRAFAC class myosin-kinesin ATPase superfamily. Kinesin family.</text>
</comment>
<comment type="sequence caution" evidence="6">
    <conflict type="erroneous initiation">
        <sequence resource="EMBL-CDS" id="AAH73177"/>
    </conflict>
</comment>
<feature type="chain" id="PRO_0000347239" description="Kinesin-like protein KIF22-B">
    <location>
        <begin position="1"/>
        <end position="650"/>
    </location>
</feature>
<feature type="domain" description="Kinesin motor" evidence="4">
    <location>
        <begin position="31"/>
        <end position="359"/>
    </location>
</feature>
<feature type="region of interest" description="Disordered" evidence="5">
    <location>
        <begin position="365"/>
        <end position="416"/>
    </location>
</feature>
<feature type="coiled-coil region" evidence="3">
    <location>
        <begin position="452"/>
        <end position="498"/>
    </location>
</feature>
<feature type="short sequence motif" description="Important for regulated proteolytic degradation" evidence="1">
    <location>
        <begin position="560"/>
        <end position="563"/>
    </location>
</feature>
<feature type="compositionally biased region" description="Low complexity" evidence="5">
    <location>
        <begin position="401"/>
        <end position="411"/>
    </location>
</feature>
<feature type="binding site" evidence="4">
    <location>
        <begin position="116"/>
        <end position="123"/>
    </location>
    <ligand>
        <name>ATP</name>
        <dbReference type="ChEBI" id="CHEBI:30616"/>
    </ligand>
</feature>
<feature type="sequence conflict" description="In Ref. 1; CAB71799." evidence="6" ref="1">
    <original>V</original>
    <variation>A</variation>
    <location>
        <position position="18"/>
    </location>
</feature>
<feature type="sequence conflict" description="In Ref. 1; CAB71799." evidence="6" ref="1">
    <original>Y</original>
    <variation>H</variation>
    <location>
        <position position="161"/>
    </location>
</feature>
<feature type="sequence conflict" description="In Ref. 1; CAB71799." evidence="6" ref="1">
    <original>E</original>
    <variation>A</variation>
    <location>
        <position position="214"/>
    </location>
</feature>
<feature type="sequence conflict" description="In Ref. 1; CAB71799." evidence="6" ref="1">
    <original>V</original>
    <variation>A</variation>
    <location>
        <position position="522"/>
    </location>
</feature>
<gene>
    <name type="primary">kif22-b</name>
    <name type="synonym">kid-b</name>
</gene>
<proteinExistence type="evidence at transcript level"/>
<reference key="1">
    <citation type="journal article" date="2000" name="Cell">
        <title>Xkid, a chromokinesin required for chromosome alignment on the metaphase plate.</title>
        <authorList>
            <person name="Antonio C."/>
            <person name="Ferby I."/>
            <person name="Wilhelm H."/>
            <person name="Jones M."/>
            <person name="Karsenti E."/>
            <person name="Nebreda A.R."/>
            <person name="Vernos I."/>
        </authorList>
    </citation>
    <scope>NUCLEOTIDE SEQUENCE [MRNA]</scope>
    <source>
        <tissue>Oocyte</tissue>
    </source>
</reference>
<reference key="2">
    <citation type="submission" date="2004-06" db="EMBL/GenBank/DDBJ databases">
        <authorList>
            <consortium name="NIH - Xenopus Gene Collection (XGC) project"/>
        </authorList>
    </citation>
    <scope>NUCLEOTIDE SEQUENCE [LARGE SCALE MRNA]</scope>
    <source>
        <tissue>Embryo</tissue>
    </source>
</reference>
<evidence type="ECO:0000250" key="1"/>
<evidence type="ECO:0000250" key="2">
    <source>
        <dbReference type="UniProtKB" id="Q9I869"/>
    </source>
</evidence>
<evidence type="ECO:0000255" key="3"/>
<evidence type="ECO:0000255" key="4">
    <source>
        <dbReference type="PROSITE-ProRule" id="PRU00283"/>
    </source>
</evidence>
<evidence type="ECO:0000256" key="5">
    <source>
        <dbReference type="SAM" id="MobiDB-lite"/>
    </source>
</evidence>
<evidence type="ECO:0000305" key="6"/>
<name>KF22B_XENLA</name>
<organism>
    <name type="scientific">Xenopus laevis</name>
    <name type="common">African clawed frog</name>
    <dbReference type="NCBI Taxonomy" id="8355"/>
    <lineage>
        <taxon>Eukaryota</taxon>
        <taxon>Metazoa</taxon>
        <taxon>Chordata</taxon>
        <taxon>Craniata</taxon>
        <taxon>Vertebrata</taxon>
        <taxon>Euteleostomi</taxon>
        <taxon>Amphibia</taxon>
        <taxon>Batrachia</taxon>
        <taxon>Anura</taxon>
        <taxon>Pipoidea</taxon>
        <taxon>Pipidae</taxon>
        <taxon>Xenopodinae</taxon>
        <taxon>Xenopus</taxon>
        <taxon>Xenopus</taxon>
    </lineage>
</organism>
<sequence length="650" mass="73168">MVLTGPPQRESVSMVKRVSMLDQHKKSSCARVRVAVRLRPYMEEKEEDKVPTACVRGLDSHSLEIVNWRNQLETMQYQFDAFYGDSASQREIYMGSVCHILPHLLIGQNASVFAYGPTGAGKTHTMLGNPDQPGVIPRAVRELLQMTRMAASAPENENWTYTITMSYVEIYQEKVMDLLEPKNKDLPIREDKDHNILIPGVTLKTINSFGDFDEHFIPASQNRTVASTKLNDRSSRSHAVLLIKVQKSQQVAPFRQLIGKLYLIDLAGSEDNRRTGNQGIRLKESGAINSSLFTLSKVVDALNQGLPRIPYRDSKLTRLLQDSLGGSAHSVMITNIAPEQTYYFDTLTALNFAAKSKQIINKPFSRETTQTVAQPAMKRPREEAEATTSSRQRKKSKTDSTESSPNSSMESTGKRKLNLASLDSAVVERLLKLDKILTEKGKKEAQLLSTPKRERMALLKKWEESQMEIERLKEKQKELEQKAMEAEARLEKSNNSDLSDSSVSENTFRAPLRGRNTSTAKVKKVLRVLPMQGNSQLQSTIEEGIPVFEKKKKKQVTCDGHENQPTWEMNMRTDLLESGKERILKLLNTGSVKELKSLQRIGDKKAKLIIGWREVNGLFKNVEELECLEGISAKQVSSFIKANILSSISS</sequence>
<keyword id="KW-0067">ATP-binding</keyword>
<keyword id="KW-0175">Coiled coil</keyword>
<keyword id="KW-0963">Cytoplasm</keyword>
<keyword id="KW-0206">Cytoskeleton</keyword>
<keyword id="KW-0238">DNA-binding</keyword>
<keyword id="KW-0493">Microtubule</keyword>
<keyword id="KW-0505">Motor protein</keyword>
<keyword id="KW-0547">Nucleotide-binding</keyword>
<keyword id="KW-0539">Nucleus</keyword>
<keyword id="KW-1185">Reference proteome</keyword>
<keyword id="KW-0832">Ubl conjugation</keyword>